<protein>
    <recommendedName>
        <fullName evidence="1">Phosphatidylserine decarboxylase proenzyme</fullName>
        <ecNumber evidence="1">4.1.1.65</ecNumber>
    </recommendedName>
    <component>
        <recommendedName>
            <fullName evidence="1">Phosphatidylserine decarboxylase alpha chain</fullName>
        </recommendedName>
    </component>
    <component>
        <recommendedName>
            <fullName evidence="1">Phosphatidylserine decarboxylase beta chain</fullName>
        </recommendedName>
    </component>
</protein>
<gene>
    <name evidence="1" type="primary">psd</name>
    <name type="ordered locus">CKO_03674</name>
</gene>
<organism>
    <name type="scientific">Citrobacter koseri (strain ATCC BAA-895 / CDC 4225-83 / SGSC4696)</name>
    <dbReference type="NCBI Taxonomy" id="290338"/>
    <lineage>
        <taxon>Bacteria</taxon>
        <taxon>Pseudomonadati</taxon>
        <taxon>Pseudomonadota</taxon>
        <taxon>Gammaproteobacteria</taxon>
        <taxon>Enterobacterales</taxon>
        <taxon>Enterobacteriaceae</taxon>
        <taxon>Citrobacter</taxon>
    </lineage>
</organism>
<dbReference type="EC" id="4.1.1.65" evidence="1"/>
<dbReference type="EMBL" id="CP000822">
    <property type="protein sequence ID" value="ABV14751.1"/>
    <property type="molecule type" value="Genomic_DNA"/>
</dbReference>
<dbReference type="SMR" id="A8AMN8"/>
<dbReference type="STRING" id="290338.CKO_03674"/>
<dbReference type="GeneID" id="45137378"/>
<dbReference type="KEGG" id="cko:CKO_03674"/>
<dbReference type="HOGENOM" id="CLU_029061_4_1_6"/>
<dbReference type="OrthoDB" id="9802030at2"/>
<dbReference type="UniPathway" id="UPA00558">
    <property type="reaction ID" value="UER00616"/>
</dbReference>
<dbReference type="Proteomes" id="UP000008148">
    <property type="component" value="Chromosome"/>
</dbReference>
<dbReference type="GO" id="GO:0005886">
    <property type="term" value="C:plasma membrane"/>
    <property type="evidence" value="ECO:0007669"/>
    <property type="project" value="UniProtKB-SubCell"/>
</dbReference>
<dbReference type="GO" id="GO:0004609">
    <property type="term" value="F:phosphatidylserine decarboxylase activity"/>
    <property type="evidence" value="ECO:0007669"/>
    <property type="project" value="UniProtKB-UniRule"/>
</dbReference>
<dbReference type="GO" id="GO:0006646">
    <property type="term" value="P:phosphatidylethanolamine biosynthetic process"/>
    <property type="evidence" value="ECO:0007669"/>
    <property type="project" value="UniProtKB-UniRule"/>
</dbReference>
<dbReference type="HAMAP" id="MF_00662">
    <property type="entry name" value="PS_decarb_PSD_B_type1"/>
    <property type="match status" value="1"/>
</dbReference>
<dbReference type="InterPro" id="IPR003817">
    <property type="entry name" value="PS_Dcarbxylase"/>
</dbReference>
<dbReference type="InterPro" id="IPR033177">
    <property type="entry name" value="PSD-B"/>
</dbReference>
<dbReference type="InterPro" id="IPR033178">
    <property type="entry name" value="PSD_type1_pro"/>
</dbReference>
<dbReference type="NCBIfam" id="TIGR00163">
    <property type="entry name" value="PS_decarb"/>
    <property type="match status" value="1"/>
</dbReference>
<dbReference type="PANTHER" id="PTHR10067">
    <property type="entry name" value="PHOSPHATIDYLSERINE DECARBOXYLASE"/>
    <property type="match status" value="1"/>
</dbReference>
<dbReference type="PANTHER" id="PTHR10067:SF6">
    <property type="entry name" value="PHOSPHATIDYLSERINE DECARBOXYLASE PROENZYME, MITOCHONDRIAL"/>
    <property type="match status" value="1"/>
</dbReference>
<dbReference type="Pfam" id="PF02666">
    <property type="entry name" value="PS_Dcarbxylase"/>
    <property type="match status" value="1"/>
</dbReference>
<name>PSD_CITK8</name>
<comment type="function">
    <text evidence="1">Catalyzes the formation of phosphatidylethanolamine (PtdEtn) from phosphatidylserine (PtdSer).</text>
</comment>
<comment type="catalytic activity">
    <reaction evidence="1">
        <text>a 1,2-diacyl-sn-glycero-3-phospho-L-serine + H(+) = a 1,2-diacyl-sn-glycero-3-phosphoethanolamine + CO2</text>
        <dbReference type="Rhea" id="RHEA:20828"/>
        <dbReference type="ChEBI" id="CHEBI:15378"/>
        <dbReference type="ChEBI" id="CHEBI:16526"/>
        <dbReference type="ChEBI" id="CHEBI:57262"/>
        <dbReference type="ChEBI" id="CHEBI:64612"/>
        <dbReference type="EC" id="4.1.1.65"/>
    </reaction>
</comment>
<comment type="cofactor">
    <cofactor evidence="1">
        <name>pyruvate</name>
        <dbReference type="ChEBI" id="CHEBI:15361"/>
    </cofactor>
    <text evidence="1">Binds 1 pyruvoyl group covalently per subunit.</text>
</comment>
<comment type="pathway">
    <text evidence="1">Phospholipid metabolism; phosphatidylethanolamine biosynthesis; phosphatidylethanolamine from CDP-diacylglycerol: step 2/2.</text>
</comment>
<comment type="subunit">
    <text evidence="1">Heterodimer of a large membrane-associated beta subunit and a small pyruvoyl-containing alpha subunit.</text>
</comment>
<comment type="subcellular location">
    <subcellularLocation>
        <location evidence="1">Cell membrane</location>
        <topology evidence="1">Peripheral membrane protein</topology>
    </subcellularLocation>
</comment>
<comment type="PTM">
    <text evidence="1">Is synthesized initially as an inactive proenzyme. Formation of the active enzyme involves a self-maturation process in which the active site pyruvoyl group is generated from an internal serine residue via an autocatalytic post-translational modification. Two non-identical subunits are generated from the proenzyme in this reaction, and the pyruvate is formed at the N-terminus of the alpha chain, which is derived from the carboxyl end of the proenzyme. The autoendoproteolytic cleavage occurs by a canonical serine protease mechanism, in which the side chain hydroxyl group of the serine supplies its oxygen atom to form the C-terminus of the beta chain, while the remainder of the serine residue undergoes an oxidative deamination to produce ammonia and the pyruvoyl prosthetic group on the alpha chain. During this reaction, the Ser that is part of the protease active site of the proenzyme becomes the pyruvoyl prosthetic group, which constitutes an essential element of the active site of the mature decarboxylase.</text>
</comment>
<comment type="similarity">
    <text evidence="1">Belongs to the phosphatidylserine decarboxylase family. PSD-B subfamily. Prokaryotic type I sub-subfamily.</text>
</comment>
<accession>A8AMN8</accession>
<evidence type="ECO:0000255" key="1">
    <source>
        <dbReference type="HAMAP-Rule" id="MF_00662"/>
    </source>
</evidence>
<evidence type="ECO:0000256" key="2">
    <source>
        <dbReference type="SAM" id="MobiDB-lite"/>
    </source>
</evidence>
<proteinExistence type="inferred from homology"/>
<reference key="1">
    <citation type="submission" date="2007-08" db="EMBL/GenBank/DDBJ databases">
        <authorList>
            <consortium name="The Citrobacter koseri Genome Sequencing Project"/>
            <person name="McClelland M."/>
            <person name="Sanderson E.K."/>
            <person name="Porwollik S."/>
            <person name="Spieth J."/>
            <person name="Clifton W.S."/>
            <person name="Latreille P."/>
            <person name="Courtney L."/>
            <person name="Wang C."/>
            <person name="Pepin K."/>
            <person name="Bhonagiri V."/>
            <person name="Nash W."/>
            <person name="Johnson M."/>
            <person name="Thiruvilangam P."/>
            <person name="Wilson R."/>
        </authorList>
    </citation>
    <scope>NUCLEOTIDE SEQUENCE [LARGE SCALE GENOMIC DNA]</scope>
    <source>
        <strain>ATCC BAA-895 / CDC 4225-83 / SGSC4696</strain>
    </source>
</reference>
<sequence>MLNSFKLSLQYILPKLWLTRLAGWGARKRAGWLTKLVIDLFVKYYKVDMKEAQKPDTASYRTFNDFFVRPLRDDVRPVNTDPNVLVMPADGVISQSGKIEEDKILQAKGHNYSLEALLAGNYLMADLFRNGSFVTTYLSPRDYHRVHMPCNGILREMIYVPGDLFSVNHLTAQNVPNLFARNERVICLFDTEFGPMAQILVGATIVGSIETVWAGTITPPREGVIKRWTWPEGESEGSVALLKGQEMGRFKLGSTVINLFAPGKVTLAEQLQSLSVTKIGQPLAVSTELFVTPEAEPAPLPEEEINAEHDASPLVDDKKDES</sequence>
<keyword id="KW-1003">Cell membrane</keyword>
<keyword id="KW-0210">Decarboxylase</keyword>
<keyword id="KW-0444">Lipid biosynthesis</keyword>
<keyword id="KW-0443">Lipid metabolism</keyword>
<keyword id="KW-0456">Lyase</keyword>
<keyword id="KW-0472">Membrane</keyword>
<keyword id="KW-0594">Phospholipid biosynthesis</keyword>
<keyword id="KW-1208">Phospholipid metabolism</keyword>
<keyword id="KW-0670">Pyruvate</keyword>
<keyword id="KW-1185">Reference proteome</keyword>
<keyword id="KW-0865">Zymogen</keyword>
<feature type="chain" id="PRO_1000026540" description="Phosphatidylserine decarboxylase beta chain" evidence="1">
    <location>
        <begin position="1"/>
        <end position="253"/>
    </location>
</feature>
<feature type="chain" id="PRO_1000026541" description="Phosphatidylserine decarboxylase alpha chain" evidence="1">
    <location>
        <begin position="254"/>
        <end position="322"/>
    </location>
</feature>
<feature type="region of interest" description="Disordered" evidence="2">
    <location>
        <begin position="294"/>
        <end position="322"/>
    </location>
</feature>
<feature type="compositionally biased region" description="Basic and acidic residues" evidence="2">
    <location>
        <begin position="306"/>
        <end position="322"/>
    </location>
</feature>
<feature type="active site" description="Charge relay system; for autoendoproteolytic cleavage activity" evidence="1">
    <location>
        <position position="90"/>
    </location>
</feature>
<feature type="active site" description="Charge relay system; for autoendoproteolytic cleavage activity" evidence="1">
    <location>
        <position position="147"/>
    </location>
</feature>
<feature type="active site" description="Charge relay system; for autoendoproteolytic cleavage activity" evidence="1">
    <location>
        <position position="254"/>
    </location>
</feature>
<feature type="active site" description="Schiff-base intermediate with substrate; via pyruvic acid; for decarboxylase activity" evidence="1">
    <location>
        <position position="254"/>
    </location>
</feature>
<feature type="site" description="Cleavage (non-hydrolytic); by autocatalysis" evidence="1">
    <location>
        <begin position="253"/>
        <end position="254"/>
    </location>
</feature>
<feature type="modified residue" description="Pyruvic acid (Ser); by autocatalysis" evidence="1">
    <location>
        <position position="254"/>
    </location>
</feature>